<gene>
    <name evidence="1" type="primary">obg</name>
    <name type="ordered locus">BLA_0290</name>
</gene>
<evidence type="ECO:0000255" key="1">
    <source>
        <dbReference type="HAMAP-Rule" id="MF_01454"/>
    </source>
</evidence>
<evidence type="ECO:0000255" key="2">
    <source>
        <dbReference type="PROSITE-ProRule" id="PRU01229"/>
    </source>
</evidence>
<evidence type="ECO:0000255" key="3">
    <source>
        <dbReference type="PROSITE-ProRule" id="PRU01231"/>
    </source>
</evidence>
<evidence type="ECO:0000256" key="4">
    <source>
        <dbReference type="SAM" id="MobiDB-lite"/>
    </source>
</evidence>
<accession>B8DVU1</accession>
<keyword id="KW-0963">Cytoplasm</keyword>
<keyword id="KW-0342">GTP-binding</keyword>
<keyword id="KW-0378">Hydrolase</keyword>
<keyword id="KW-0460">Magnesium</keyword>
<keyword id="KW-0479">Metal-binding</keyword>
<keyword id="KW-0547">Nucleotide-binding</keyword>
<keyword id="KW-1185">Reference proteome</keyword>
<organism>
    <name type="scientific">Bifidobacterium animalis subsp. lactis (strain AD011)</name>
    <dbReference type="NCBI Taxonomy" id="442563"/>
    <lineage>
        <taxon>Bacteria</taxon>
        <taxon>Bacillati</taxon>
        <taxon>Actinomycetota</taxon>
        <taxon>Actinomycetes</taxon>
        <taxon>Bifidobacteriales</taxon>
        <taxon>Bifidobacteriaceae</taxon>
        <taxon>Bifidobacterium</taxon>
    </lineage>
</organism>
<dbReference type="EC" id="3.6.5.-" evidence="1"/>
<dbReference type="EMBL" id="CP001213">
    <property type="protein sequence ID" value="ACL28592.1"/>
    <property type="molecule type" value="Genomic_DNA"/>
</dbReference>
<dbReference type="SMR" id="B8DVU1"/>
<dbReference type="STRING" id="442563.BLA_0290"/>
<dbReference type="KEGG" id="bla:BLA_0290"/>
<dbReference type="PATRIC" id="fig|442563.4.peg.310"/>
<dbReference type="HOGENOM" id="CLU_011747_1_0_11"/>
<dbReference type="Proteomes" id="UP000002456">
    <property type="component" value="Chromosome"/>
</dbReference>
<dbReference type="GO" id="GO:0005737">
    <property type="term" value="C:cytoplasm"/>
    <property type="evidence" value="ECO:0007669"/>
    <property type="project" value="UniProtKB-SubCell"/>
</dbReference>
<dbReference type="GO" id="GO:0005525">
    <property type="term" value="F:GTP binding"/>
    <property type="evidence" value="ECO:0007669"/>
    <property type="project" value="UniProtKB-UniRule"/>
</dbReference>
<dbReference type="GO" id="GO:0003924">
    <property type="term" value="F:GTPase activity"/>
    <property type="evidence" value="ECO:0007669"/>
    <property type="project" value="UniProtKB-UniRule"/>
</dbReference>
<dbReference type="GO" id="GO:0000287">
    <property type="term" value="F:magnesium ion binding"/>
    <property type="evidence" value="ECO:0007669"/>
    <property type="project" value="InterPro"/>
</dbReference>
<dbReference type="GO" id="GO:0042254">
    <property type="term" value="P:ribosome biogenesis"/>
    <property type="evidence" value="ECO:0007669"/>
    <property type="project" value="UniProtKB-UniRule"/>
</dbReference>
<dbReference type="CDD" id="cd01898">
    <property type="entry name" value="Obg"/>
    <property type="match status" value="1"/>
</dbReference>
<dbReference type="FunFam" id="2.70.210.12:FF:000001">
    <property type="entry name" value="GTPase Obg"/>
    <property type="match status" value="1"/>
</dbReference>
<dbReference type="Gene3D" id="3.30.300.350">
    <property type="entry name" value="GTP-binding protein OBG, C-terminal domain"/>
    <property type="match status" value="1"/>
</dbReference>
<dbReference type="Gene3D" id="2.70.210.12">
    <property type="entry name" value="GTP1/OBG domain"/>
    <property type="match status" value="1"/>
</dbReference>
<dbReference type="Gene3D" id="3.40.50.300">
    <property type="entry name" value="P-loop containing nucleotide triphosphate hydrolases"/>
    <property type="match status" value="1"/>
</dbReference>
<dbReference type="HAMAP" id="MF_01454">
    <property type="entry name" value="GTPase_Obg"/>
    <property type="match status" value="1"/>
</dbReference>
<dbReference type="InterPro" id="IPR031167">
    <property type="entry name" value="G_OBG"/>
</dbReference>
<dbReference type="InterPro" id="IPR006073">
    <property type="entry name" value="GTP-bd"/>
</dbReference>
<dbReference type="InterPro" id="IPR014100">
    <property type="entry name" value="GTP-bd_Obg/CgtA"/>
</dbReference>
<dbReference type="InterPro" id="IPR036346">
    <property type="entry name" value="GTP-bd_prot_GTP1/OBG_C_sf"/>
</dbReference>
<dbReference type="InterPro" id="IPR006074">
    <property type="entry name" value="GTP1-OBG_CS"/>
</dbReference>
<dbReference type="InterPro" id="IPR006169">
    <property type="entry name" value="GTP1_OBG_dom"/>
</dbReference>
<dbReference type="InterPro" id="IPR036726">
    <property type="entry name" value="GTP1_OBG_dom_sf"/>
</dbReference>
<dbReference type="InterPro" id="IPR045086">
    <property type="entry name" value="OBG_GTPase"/>
</dbReference>
<dbReference type="InterPro" id="IPR015349">
    <property type="entry name" value="OCT_dom"/>
</dbReference>
<dbReference type="InterPro" id="IPR027417">
    <property type="entry name" value="P-loop_NTPase"/>
</dbReference>
<dbReference type="NCBIfam" id="TIGR02729">
    <property type="entry name" value="Obg_CgtA"/>
    <property type="match status" value="1"/>
</dbReference>
<dbReference type="NCBIfam" id="TIGR03595">
    <property type="entry name" value="Obg_CgtA_exten"/>
    <property type="match status" value="1"/>
</dbReference>
<dbReference type="NCBIfam" id="NF008954">
    <property type="entry name" value="PRK12296.1"/>
    <property type="match status" value="1"/>
</dbReference>
<dbReference type="NCBIfam" id="NF008955">
    <property type="entry name" value="PRK12297.1"/>
    <property type="match status" value="1"/>
</dbReference>
<dbReference type="NCBIfam" id="NF008956">
    <property type="entry name" value="PRK12299.1"/>
    <property type="match status" value="1"/>
</dbReference>
<dbReference type="PANTHER" id="PTHR11702">
    <property type="entry name" value="DEVELOPMENTALLY REGULATED GTP-BINDING PROTEIN-RELATED"/>
    <property type="match status" value="1"/>
</dbReference>
<dbReference type="PANTHER" id="PTHR11702:SF31">
    <property type="entry name" value="MITOCHONDRIAL RIBOSOME-ASSOCIATED GTPASE 2"/>
    <property type="match status" value="1"/>
</dbReference>
<dbReference type="Pfam" id="PF09269">
    <property type="entry name" value="DUF1967"/>
    <property type="match status" value="1"/>
</dbReference>
<dbReference type="Pfam" id="PF01018">
    <property type="entry name" value="GTP1_OBG"/>
    <property type="match status" value="1"/>
</dbReference>
<dbReference type="Pfam" id="PF01926">
    <property type="entry name" value="MMR_HSR1"/>
    <property type="match status" value="1"/>
</dbReference>
<dbReference type="PRINTS" id="PR00326">
    <property type="entry name" value="GTP1OBG"/>
</dbReference>
<dbReference type="SUPFAM" id="SSF102741">
    <property type="entry name" value="Obg GTP-binding protein C-terminal domain"/>
    <property type="match status" value="1"/>
</dbReference>
<dbReference type="SUPFAM" id="SSF82051">
    <property type="entry name" value="Obg GTP-binding protein N-terminal domain"/>
    <property type="match status" value="1"/>
</dbReference>
<dbReference type="SUPFAM" id="SSF52540">
    <property type="entry name" value="P-loop containing nucleoside triphosphate hydrolases"/>
    <property type="match status" value="1"/>
</dbReference>
<dbReference type="PROSITE" id="PS51710">
    <property type="entry name" value="G_OBG"/>
    <property type="match status" value="1"/>
</dbReference>
<dbReference type="PROSITE" id="PS00905">
    <property type="entry name" value="GTP1_OBG"/>
    <property type="match status" value="1"/>
</dbReference>
<dbReference type="PROSITE" id="PS51883">
    <property type="entry name" value="OBG"/>
    <property type="match status" value="1"/>
</dbReference>
<dbReference type="PROSITE" id="PS51881">
    <property type="entry name" value="OCT"/>
    <property type="match status" value="1"/>
</dbReference>
<comment type="function">
    <text evidence="1">An essential GTPase which binds GTP, GDP and possibly (p)ppGpp with moderate affinity, with high nucleotide exchange rates and a fairly low GTP hydrolysis rate. Plays a role in control of the cell cycle, stress response, ribosome biogenesis and in those bacteria that undergo differentiation, in morphogenesis control.</text>
</comment>
<comment type="cofactor">
    <cofactor evidence="1">
        <name>Mg(2+)</name>
        <dbReference type="ChEBI" id="CHEBI:18420"/>
    </cofactor>
</comment>
<comment type="subunit">
    <text evidence="1">Monomer.</text>
</comment>
<comment type="subcellular location">
    <subcellularLocation>
        <location evidence="1">Cytoplasm</location>
    </subcellularLocation>
</comment>
<comment type="similarity">
    <text evidence="1">Belongs to the TRAFAC class OBG-HflX-like GTPase superfamily. OBG GTPase family.</text>
</comment>
<protein>
    <recommendedName>
        <fullName evidence="1">GTPase Obg</fullName>
        <ecNumber evidence="1">3.6.5.-</ecNumber>
    </recommendedName>
    <alternativeName>
        <fullName evidence="1">GTP-binding protein Obg</fullName>
    </alternativeName>
</protein>
<reference key="1">
    <citation type="journal article" date="2009" name="J. Bacteriol.">
        <title>Genome sequence of the probiotic bacterium Bifidobacterium animalis subsp. lactis AD011.</title>
        <authorList>
            <person name="Kim J.F."/>
            <person name="Jeong H."/>
            <person name="Yu D.S."/>
            <person name="Choi S.-H."/>
            <person name="Hur C.-G."/>
            <person name="Park M.-S."/>
            <person name="Yoon S.H."/>
            <person name="Kim D.-W."/>
            <person name="Ji G.E."/>
            <person name="Park H.-S."/>
            <person name="Oh T.K."/>
        </authorList>
    </citation>
    <scope>NUCLEOTIDE SEQUENCE [LARGE SCALE GENOMIC DNA]</scope>
    <source>
        <strain>AD011</strain>
    </source>
</reference>
<name>OBG_BIFA0</name>
<proteinExistence type="inferred from homology"/>
<feature type="chain" id="PRO_0000385743" description="GTPase Obg">
    <location>
        <begin position="1"/>
        <end position="570"/>
    </location>
</feature>
<feature type="domain" description="Obg" evidence="3">
    <location>
        <begin position="2"/>
        <end position="168"/>
    </location>
</feature>
<feature type="domain" description="OBG-type G" evidence="1">
    <location>
        <begin position="169"/>
        <end position="349"/>
    </location>
</feature>
<feature type="domain" description="OCT" evidence="2">
    <location>
        <begin position="382"/>
        <end position="468"/>
    </location>
</feature>
<feature type="region of interest" description="Disordered" evidence="4">
    <location>
        <begin position="15"/>
        <end position="43"/>
    </location>
</feature>
<feature type="region of interest" description="Disordered" evidence="4">
    <location>
        <begin position="521"/>
        <end position="570"/>
    </location>
</feature>
<feature type="binding site" evidence="1">
    <location>
        <begin position="175"/>
        <end position="182"/>
    </location>
    <ligand>
        <name>GTP</name>
        <dbReference type="ChEBI" id="CHEBI:37565"/>
    </ligand>
</feature>
<feature type="binding site" evidence="1">
    <location>
        <position position="182"/>
    </location>
    <ligand>
        <name>Mg(2+)</name>
        <dbReference type="ChEBI" id="CHEBI:18420"/>
    </ligand>
</feature>
<feature type="binding site" evidence="1">
    <location>
        <begin position="200"/>
        <end position="204"/>
    </location>
    <ligand>
        <name>GTP</name>
        <dbReference type="ChEBI" id="CHEBI:37565"/>
    </ligand>
</feature>
<feature type="binding site" evidence="1">
    <location>
        <position position="202"/>
    </location>
    <ligand>
        <name>Mg(2+)</name>
        <dbReference type="ChEBI" id="CHEBI:18420"/>
    </ligand>
</feature>
<feature type="binding site" evidence="1">
    <location>
        <begin position="221"/>
        <end position="224"/>
    </location>
    <ligand>
        <name>GTP</name>
        <dbReference type="ChEBI" id="CHEBI:37565"/>
    </ligand>
</feature>
<feature type="binding site" evidence="1">
    <location>
        <begin position="301"/>
        <end position="304"/>
    </location>
    <ligand>
        <name>GTP</name>
        <dbReference type="ChEBI" id="CHEBI:37565"/>
    </ligand>
</feature>
<feature type="binding site" evidence="1">
    <location>
        <begin position="330"/>
        <end position="332"/>
    </location>
    <ligand>
        <name>GTP</name>
        <dbReference type="ChEBI" id="CHEBI:37565"/>
    </ligand>
</feature>
<sequence length="570" mass="61793">MSDFVDRVTVHVKGGDGGNGSAGIRREKYKPLAGPNGGNGGKGGSVILKADQNATSLLDFRFMPHRTADSGTMGLGDTKDGSNGADLVLPVPVGTVVFEARGAQGFPKKPGAVLADLRHAGDTYVAAAGGAGGLGNAALANRTRRAPGFALLGEPGDERDIILELKSIADVALVGFPSAGKSSLIAAMSAAKPKIADYPFTTLVPNLGVVQAGDMRYTIADVPGLIPGASQGKGLGLTFLRHIERTEIIAHVIDCVTIDPDRDPLSDYYALEKELGEYADDLDLPLGAIPIPERPRVIILNKIDVPDAKELADFVRPEFEKLDLPVYEISTASHAGLKELNFALAKLVKEMRAQIAEREESVDEERVVIKPLEEPGTQRRNGRNAQVREFEIEREDDGHGNFWFTVTGVKPERWVRQTNFDNDEAVGYLADRLAKLGVEDSLRKHGAHAGDEVRIGRGERAVAFDWDPTIAAGAEMLDGTQLGSRGKDLRLEEEDGRKRRRTNSERRREYHEMMDARAAVRAAMQAERAAGHWADPSIDDDRHDEQSLFGRGEVEEYEDEPGADGSRQLD</sequence>